<protein>
    <recommendedName>
        <fullName evidence="4">Kazal peptide Pr13a</fullName>
    </recommendedName>
    <alternativeName>
        <fullName evidence="7">Venom Kazal domain peptide Pr13a</fullName>
    </alternativeName>
</protein>
<dbReference type="EMBL" id="MN208328">
    <property type="protein sequence ID" value="QHB21517.1"/>
    <property type="molecule type" value="mRNA"/>
</dbReference>
<dbReference type="SMR" id="A0A6B9L1F0"/>
<dbReference type="GO" id="GO:0005576">
    <property type="term" value="C:extracellular region"/>
    <property type="evidence" value="ECO:0007669"/>
    <property type="project" value="UniProtKB-SubCell"/>
</dbReference>
<dbReference type="GO" id="GO:0004867">
    <property type="term" value="F:serine-type endopeptidase inhibitor activity"/>
    <property type="evidence" value="ECO:0007669"/>
    <property type="project" value="UniProtKB-KW"/>
</dbReference>
<dbReference type="Gene3D" id="3.30.60.30">
    <property type="match status" value="1"/>
</dbReference>
<dbReference type="InterPro" id="IPR002350">
    <property type="entry name" value="Kazal_dom"/>
</dbReference>
<dbReference type="InterPro" id="IPR036058">
    <property type="entry name" value="Kazal_dom_sf"/>
</dbReference>
<dbReference type="Pfam" id="PF07648">
    <property type="entry name" value="Kazal_2"/>
    <property type="match status" value="1"/>
</dbReference>
<dbReference type="SUPFAM" id="SSF100895">
    <property type="entry name" value="Kazal-type serine protease inhibitors"/>
    <property type="match status" value="1"/>
</dbReference>
<dbReference type="PROSITE" id="PS51465">
    <property type="entry name" value="KAZAL_2"/>
    <property type="match status" value="1"/>
</dbReference>
<name>PR13A_PLARH</name>
<organism>
    <name type="scientific">Platymeris rhadamanthus</name>
    <name type="common">Red spot assassin bug</name>
    <dbReference type="NCBI Taxonomy" id="1134088"/>
    <lineage>
        <taxon>Eukaryota</taxon>
        <taxon>Metazoa</taxon>
        <taxon>Ecdysozoa</taxon>
        <taxon>Arthropoda</taxon>
        <taxon>Hexapoda</taxon>
        <taxon>Insecta</taxon>
        <taxon>Pterygota</taxon>
        <taxon>Neoptera</taxon>
        <taxon>Paraneoptera</taxon>
        <taxon>Hemiptera</taxon>
        <taxon>Heteroptera</taxon>
        <taxon>Panheteroptera</taxon>
        <taxon>Cimicomorpha</taxon>
        <taxon>Reduviidae</taxon>
        <taxon>Platymeris</taxon>
    </lineage>
</organism>
<comment type="function">
    <text evidence="5">May act as a serine protease inhibitor, since it possess the kazal serine protease inhibitor signature.</text>
</comment>
<comment type="subcellular location">
    <subcellularLocation>
        <location evidence="6">Secreted</location>
    </subcellularLocation>
</comment>
<comment type="tissue specificity">
    <text evidence="3">Expressed by the venom gland (anterior main gland) (at protein level).</text>
</comment>
<evidence type="ECO:0000255" key="1"/>
<evidence type="ECO:0000255" key="2">
    <source>
        <dbReference type="PROSITE-ProRule" id="PRU00798"/>
    </source>
</evidence>
<evidence type="ECO:0000269" key="3">
    <source>
    </source>
</evidence>
<evidence type="ECO:0000303" key="4">
    <source>
    </source>
</evidence>
<evidence type="ECO:0000305" key="5"/>
<evidence type="ECO:0000305" key="6">
    <source>
    </source>
</evidence>
<evidence type="ECO:0000312" key="7">
    <source>
        <dbReference type="EMBL" id="QHB21517.1"/>
    </source>
</evidence>
<feature type="signal peptide" evidence="1">
    <location>
        <begin position="1"/>
        <end position="20"/>
    </location>
</feature>
<feature type="chain" id="PRO_5025470253" description="Kazal peptide Pr13a" evidence="5">
    <location>
        <begin position="21"/>
        <end position="73"/>
    </location>
</feature>
<feature type="domain" description="Kazal-like" evidence="2">
    <location>
        <begin position="21"/>
        <end position="73"/>
    </location>
</feature>
<feature type="site" description="Reactive bond" evidence="2">
    <location>
        <begin position="29"/>
        <end position="30"/>
    </location>
</feature>
<feature type="disulfide bond" evidence="2">
    <location>
        <begin position="23"/>
        <end position="59"/>
    </location>
</feature>
<feature type="disulfide bond" evidence="2">
    <location>
        <begin position="27"/>
        <end position="52"/>
    </location>
</feature>
<feature type="disulfide bond" evidence="2">
    <location>
        <begin position="36"/>
        <end position="73"/>
    </location>
</feature>
<accession>A0A6B9L1F0</accession>
<keyword id="KW-1015">Disulfide bond</keyword>
<keyword id="KW-0646">Protease inhibitor</keyword>
<keyword id="KW-0964">Secreted</keyword>
<keyword id="KW-0722">Serine protease inhibitor</keyword>
<keyword id="KW-0732">Signal</keyword>
<reference key="1">
    <citation type="journal article" date="2019" name="Toxins">
        <title>Missiles of mass disruption: composition and glandular origin of venom used as a projectile defensive weapon by the assassin bug Platymeris rhadamanthus.</title>
        <authorList>
            <person name="Walker A.A."/>
            <person name="Robinson S.D."/>
            <person name="Undheim E.A.B."/>
            <person name="Jin J."/>
            <person name="Han X."/>
            <person name="Fry B.G."/>
            <person name="Vetter I."/>
            <person name="King G.F."/>
        </authorList>
    </citation>
    <scope>NUCLEOTIDE SEQUENCE [MRNA]</scope>
    <scope>TISSUE SPECIFICITY</scope>
    <source>
        <tissue>Venom gland</tissue>
    </source>
</reference>
<sequence length="73" mass="8200">MKYIILFLVLIGLQANLALGSKCKCDCTKYPYSPVCAKELKTGDTETFNNVCQLQCYNCTHMKNYVVIYSGSC</sequence>
<proteinExistence type="evidence at protein level"/>